<sequence>MATIQQQKIRIRLKAFDRRLLDTSCEKIVDTANRTGATALGPIPLPTKRRIYCVLRSPHVDKDSREHFETRTHRRIIDIYQPSSKTIDALMKLDLPAGVDIEVKL</sequence>
<reference key="1">
    <citation type="journal article" date="1993" name="J. Gen. Microbiol.">
        <title>The chromosomal location of genes for elongation factor Tu and ribosomal protein S10 in the cyanobacterium Spirulina platensis provides clues to the ancestral organization of the str and S10 operons in prokaryotes.</title>
        <authorList>
            <person name="Sanangelantoni A.M."/>
            <person name="Tiboni O."/>
        </authorList>
    </citation>
    <scope>NUCLEOTIDE SEQUENCE [GENOMIC DNA]</scope>
</reference>
<organism>
    <name type="scientific">Arthrospira platensis</name>
    <name type="common">Spirulina platensis</name>
    <dbReference type="NCBI Taxonomy" id="118562"/>
    <lineage>
        <taxon>Bacteria</taxon>
        <taxon>Bacillati</taxon>
        <taxon>Cyanobacteriota</taxon>
        <taxon>Cyanophyceae</taxon>
        <taxon>Oscillatoriophycideae</taxon>
        <taxon>Oscillatoriales</taxon>
        <taxon>Microcoleaceae</taxon>
        <taxon>Arthrospira</taxon>
    </lineage>
</organism>
<protein>
    <recommendedName>
        <fullName evidence="1">Small ribosomal subunit protein uS10</fullName>
    </recommendedName>
    <alternativeName>
        <fullName evidence="2">30S ribosomal protein S10</fullName>
    </alternativeName>
</protein>
<comment type="function">
    <text evidence="1">Involved in the binding of tRNA to the ribosomes.</text>
</comment>
<comment type="subunit">
    <text evidence="1">Part of the 30S ribosomal subunit.</text>
</comment>
<comment type="similarity">
    <text evidence="1">Belongs to the universal ribosomal protein uS10 family.</text>
</comment>
<gene>
    <name evidence="1" type="primary">rpsJ</name>
    <name evidence="1" type="synonym">rps10</name>
</gene>
<feature type="chain" id="PRO_0000146593" description="Small ribosomal subunit protein uS10">
    <location>
        <begin position="1"/>
        <end position="105"/>
    </location>
</feature>
<keyword id="KW-0687">Ribonucleoprotein</keyword>
<keyword id="KW-0689">Ribosomal protein</keyword>
<dbReference type="EMBL" id="Z21676">
    <property type="protein sequence ID" value="CAA79773.1"/>
    <property type="molecule type" value="Genomic_DNA"/>
</dbReference>
<dbReference type="PIR" id="S37489">
    <property type="entry name" value="S37489"/>
</dbReference>
<dbReference type="SMR" id="P48852"/>
<dbReference type="OMA" id="VDIEIKM"/>
<dbReference type="GO" id="GO:1990904">
    <property type="term" value="C:ribonucleoprotein complex"/>
    <property type="evidence" value="ECO:0007669"/>
    <property type="project" value="UniProtKB-KW"/>
</dbReference>
<dbReference type="GO" id="GO:0005840">
    <property type="term" value="C:ribosome"/>
    <property type="evidence" value="ECO:0007669"/>
    <property type="project" value="UniProtKB-KW"/>
</dbReference>
<dbReference type="GO" id="GO:0003735">
    <property type="term" value="F:structural constituent of ribosome"/>
    <property type="evidence" value="ECO:0007669"/>
    <property type="project" value="InterPro"/>
</dbReference>
<dbReference type="GO" id="GO:0000049">
    <property type="term" value="F:tRNA binding"/>
    <property type="evidence" value="ECO:0007669"/>
    <property type="project" value="UniProtKB-UniRule"/>
</dbReference>
<dbReference type="GO" id="GO:0006412">
    <property type="term" value="P:translation"/>
    <property type="evidence" value="ECO:0007669"/>
    <property type="project" value="UniProtKB-UniRule"/>
</dbReference>
<dbReference type="FunFam" id="3.30.70.600:FF:000001">
    <property type="entry name" value="30S ribosomal protein S10"/>
    <property type="match status" value="1"/>
</dbReference>
<dbReference type="Gene3D" id="3.30.70.600">
    <property type="entry name" value="Ribosomal protein S10 domain"/>
    <property type="match status" value="1"/>
</dbReference>
<dbReference type="HAMAP" id="MF_00508">
    <property type="entry name" value="Ribosomal_uS10"/>
    <property type="match status" value="1"/>
</dbReference>
<dbReference type="InterPro" id="IPR001848">
    <property type="entry name" value="Ribosomal_uS10"/>
</dbReference>
<dbReference type="InterPro" id="IPR018268">
    <property type="entry name" value="Ribosomal_uS10_CS"/>
</dbReference>
<dbReference type="InterPro" id="IPR027486">
    <property type="entry name" value="Ribosomal_uS10_dom"/>
</dbReference>
<dbReference type="InterPro" id="IPR036838">
    <property type="entry name" value="Ribosomal_uS10_dom_sf"/>
</dbReference>
<dbReference type="NCBIfam" id="NF001861">
    <property type="entry name" value="PRK00596.1"/>
    <property type="match status" value="1"/>
</dbReference>
<dbReference type="NCBIfam" id="TIGR01049">
    <property type="entry name" value="rpsJ_bact"/>
    <property type="match status" value="1"/>
</dbReference>
<dbReference type="PANTHER" id="PTHR11700">
    <property type="entry name" value="30S RIBOSOMAL PROTEIN S10 FAMILY MEMBER"/>
    <property type="match status" value="1"/>
</dbReference>
<dbReference type="Pfam" id="PF00338">
    <property type="entry name" value="Ribosomal_S10"/>
    <property type="match status" value="1"/>
</dbReference>
<dbReference type="PRINTS" id="PR00971">
    <property type="entry name" value="RIBOSOMALS10"/>
</dbReference>
<dbReference type="SMART" id="SM01403">
    <property type="entry name" value="Ribosomal_S10"/>
    <property type="match status" value="1"/>
</dbReference>
<dbReference type="SUPFAM" id="SSF54999">
    <property type="entry name" value="Ribosomal protein S10"/>
    <property type="match status" value="1"/>
</dbReference>
<dbReference type="PROSITE" id="PS00361">
    <property type="entry name" value="RIBOSOMAL_S10"/>
    <property type="match status" value="1"/>
</dbReference>
<name>RS10_ARTPT</name>
<evidence type="ECO:0000255" key="1">
    <source>
        <dbReference type="HAMAP-Rule" id="MF_00508"/>
    </source>
</evidence>
<evidence type="ECO:0000305" key="2"/>
<accession>P48852</accession>
<proteinExistence type="inferred from homology"/>